<evidence type="ECO:0000255" key="1">
    <source>
        <dbReference type="HAMAP-Rule" id="MF_03118"/>
    </source>
</evidence>
<gene>
    <name type="ORF">POPTR_0001s40980g</name>
</gene>
<organism>
    <name type="scientific">Populus trichocarpa</name>
    <name type="common">Western balsam poplar</name>
    <name type="synonym">Populus balsamifera subsp. trichocarpa</name>
    <dbReference type="NCBI Taxonomy" id="3694"/>
    <lineage>
        <taxon>Eukaryota</taxon>
        <taxon>Viridiplantae</taxon>
        <taxon>Streptophyta</taxon>
        <taxon>Embryophyta</taxon>
        <taxon>Tracheophyta</taxon>
        <taxon>Spermatophyta</taxon>
        <taxon>Magnoliopsida</taxon>
        <taxon>eudicotyledons</taxon>
        <taxon>Gunneridae</taxon>
        <taxon>Pentapetalae</taxon>
        <taxon>rosids</taxon>
        <taxon>fabids</taxon>
        <taxon>Malpighiales</taxon>
        <taxon>Salicaceae</taxon>
        <taxon>Saliceae</taxon>
        <taxon>Populus</taxon>
    </lineage>
</organism>
<proteinExistence type="inferred from homology"/>
<comment type="catalytic activity">
    <reaction evidence="1">
        <text>5-(methylsulfanyl)-D-ribulose 1-phosphate = 5-methylsulfanyl-2,3-dioxopentyl phosphate + H2O</text>
        <dbReference type="Rhea" id="RHEA:15549"/>
        <dbReference type="ChEBI" id="CHEBI:15377"/>
        <dbReference type="ChEBI" id="CHEBI:58548"/>
        <dbReference type="ChEBI" id="CHEBI:58828"/>
        <dbReference type="EC" id="4.2.1.109"/>
    </reaction>
</comment>
<comment type="catalytic activity">
    <reaction evidence="1">
        <text>5-methylsulfanyl-2,3-dioxopentyl phosphate + H2O = 1,2-dihydroxy-5-(methylsulfanyl)pent-1-en-3-one + phosphate</text>
        <dbReference type="Rhea" id="RHEA:21700"/>
        <dbReference type="ChEBI" id="CHEBI:15377"/>
        <dbReference type="ChEBI" id="CHEBI:43474"/>
        <dbReference type="ChEBI" id="CHEBI:49252"/>
        <dbReference type="ChEBI" id="CHEBI:58828"/>
        <dbReference type="EC" id="3.1.3.77"/>
    </reaction>
</comment>
<comment type="cofactor">
    <cofactor evidence="1">
        <name>Zn(2+)</name>
        <dbReference type="ChEBI" id="CHEBI:29105"/>
    </cofactor>
    <text evidence="1">Binds 1 zinc ion per subunit.</text>
</comment>
<comment type="cofactor">
    <cofactor evidence="1">
        <name>Mg(2+)</name>
        <dbReference type="ChEBI" id="CHEBI:18420"/>
    </cofactor>
    <text evidence="1">Binds 1 Mg(2+) ion per subunit.</text>
</comment>
<comment type="pathway">
    <text evidence="1">Amino-acid biosynthesis; L-methionine biosynthesis via salvage pathway; L-methionine from S-methyl-5-thio-alpha-D-ribose 1-phosphate: step 2/6.</text>
</comment>
<comment type="pathway">
    <text evidence="1">Amino-acid biosynthesis; L-methionine biosynthesis via salvage pathway; L-methionine from S-methyl-5-thio-alpha-D-ribose 1-phosphate: step 3/6.</text>
</comment>
<comment type="pathway">
    <text evidence="1">Amino-acid biosynthesis; L-methionine biosynthesis via salvage pathway; L-methionine from S-methyl-5-thio-alpha-D-ribose 1-phosphate: step 4/6.</text>
</comment>
<comment type="similarity">
    <text evidence="1">In the N-terminal section; belongs to the aldolase class II family. MtnB subfamily.</text>
</comment>
<comment type="similarity">
    <text evidence="1">In the C-terminal section; belongs to the HAD-like hydrolase superfamily. MasA/MtnC family.</text>
</comment>
<name>MTBC_POPTR</name>
<dbReference type="EC" id="4.2.1.109" evidence="1"/>
<dbReference type="EC" id="3.1.3.77" evidence="1"/>
<dbReference type="EMBL" id="CM009290">
    <property type="protein sequence ID" value="ERP66814.1"/>
    <property type="molecule type" value="Genomic_DNA"/>
</dbReference>
<dbReference type="SMR" id="B9N1F9"/>
<dbReference type="FunCoup" id="B9N1F9">
    <property type="interactions" value="2088"/>
</dbReference>
<dbReference type="STRING" id="3694.B9N1F9"/>
<dbReference type="EnsemblPlants" id="Potri.001G399000.1.v4.1">
    <property type="protein sequence ID" value="Potri.001G399000.1.v4.1"/>
    <property type="gene ID" value="Potri.001G399000.v4.1"/>
</dbReference>
<dbReference type="Gramene" id="Potri.001G399000.1.v4.1">
    <property type="protein sequence ID" value="Potri.001G399000.1.v4.1"/>
    <property type="gene ID" value="Potri.001G399000.v4.1"/>
</dbReference>
<dbReference type="KEGG" id="pop:18095573"/>
<dbReference type="eggNOG" id="KOG2630">
    <property type="taxonomic scope" value="Eukaryota"/>
</dbReference>
<dbReference type="eggNOG" id="KOG2631">
    <property type="taxonomic scope" value="Eukaryota"/>
</dbReference>
<dbReference type="HOGENOM" id="CLU_023273_3_1_1"/>
<dbReference type="InParanoid" id="B9N1F9"/>
<dbReference type="OMA" id="IPNGCHA"/>
<dbReference type="OrthoDB" id="191080at2759"/>
<dbReference type="UniPathway" id="UPA00904">
    <property type="reaction ID" value="UER00875"/>
</dbReference>
<dbReference type="UniPathway" id="UPA00904">
    <property type="reaction ID" value="UER00876"/>
</dbReference>
<dbReference type="UniPathway" id="UPA00904">
    <property type="reaction ID" value="UER00877"/>
</dbReference>
<dbReference type="Proteomes" id="UP000006729">
    <property type="component" value="Chromosome 1"/>
</dbReference>
<dbReference type="ExpressionAtlas" id="B9N1F9">
    <property type="expression patterns" value="baseline"/>
</dbReference>
<dbReference type="GO" id="GO:0005737">
    <property type="term" value="C:cytoplasm"/>
    <property type="evidence" value="ECO:0000318"/>
    <property type="project" value="GO_Central"/>
</dbReference>
<dbReference type="GO" id="GO:0043874">
    <property type="term" value="F:acireductone synthase activity"/>
    <property type="evidence" value="ECO:0007669"/>
    <property type="project" value="UniProtKB-EC"/>
</dbReference>
<dbReference type="GO" id="GO:0000287">
    <property type="term" value="F:magnesium ion binding"/>
    <property type="evidence" value="ECO:0007669"/>
    <property type="project" value="UniProtKB-UniRule"/>
</dbReference>
<dbReference type="GO" id="GO:0046570">
    <property type="term" value="F:methylthioribulose 1-phosphate dehydratase activity"/>
    <property type="evidence" value="ECO:0000318"/>
    <property type="project" value="GO_Central"/>
</dbReference>
<dbReference type="GO" id="GO:0008270">
    <property type="term" value="F:zinc ion binding"/>
    <property type="evidence" value="ECO:0007669"/>
    <property type="project" value="UniProtKB-UniRule"/>
</dbReference>
<dbReference type="GO" id="GO:0019509">
    <property type="term" value="P:L-methionine salvage from methylthioadenosine"/>
    <property type="evidence" value="ECO:0000318"/>
    <property type="project" value="GO_Central"/>
</dbReference>
<dbReference type="CDD" id="cd01629">
    <property type="entry name" value="HAD_EP"/>
    <property type="match status" value="1"/>
</dbReference>
<dbReference type="FunFam" id="1.10.720.60:FF:000001">
    <property type="entry name" value="Probable bifunctional methylthioribulose-1-phosphate dehydratase/enolase-phosphatase E1"/>
    <property type="match status" value="1"/>
</dbReference>
<dbReference type="FunFam" id="3.40.225.10:FF:000010">
    <property type="entry name" value="Probable bifunctional methylthioribulose-1-phosphate dehydratase/enolase-phosphatase E1"/>
    <property type="match status" value="1"/>
</dbReference>
<dbReference type="FunFam" id="3.40.50.1000:FF:000088">
    <property type="entry name" value="Probable bifunctional methylthioribulose-1-phosphate dehydratase/enolase-phosphatase E1"/>
    <property type="match status" value="1"/>
</dbReference>
<dbReference type="Gene3D" id="1.10.720.60">
    <property type="match status" value="1"/>
</dbReference>
<dbReference type="Gene3D" id="3.40.225.10">
    <property type="entry name" value="Class II aldolase/adducin N-terminal domain"/>
    <property type="match status" value="1"/>
</dbReference>
<dbReference type="Gene3D" id="3.40.50.1000">
    <property type="entry name" value="HAD superfamily/HAD-like"/>
    <property type="match status" value="1"/>
</dbReference>
<dbReference type="HAMAP" id="MF_03116">
    <property type="entry name" value="Salvage_MtnB_euk"/>
    <property type="match status" value="1"/>
</dbReference>
<dbReference type="HAMAP" id="MF_03118">
    <property type="entry name" value="Salvage_MtnBC"/>
    <property type="match status" value="1"/>
</dbReference>
<dbReference type="HAMAP" id="MF_03117">
    <property type="entry name" value="Salvage_MtnC_euk"/>
    <property type="match status" value="1"/>
</dbReference>
<dbReference type="InterPro" id="IPR001303">
    <property type="entry name" value="Aldolase_II/adducin_N"/>
</dbReference>
<dbReference type="InterPro" id="IPR036409">
    <property type="entry name" value="Aldolase_II/adducin_N_sf"/>
</dbReference>
<dbReference type="InterPro" id="IPR023943">
    <property type="entry name" value="Enolase-ppase_E1"/>
</dbReference>
<dbReference type="InterPro" id="IPR027511">
    <property type="entry name" value="ENOPH1_eukaryotes"/>
</dbReference>
<dbReference type="InterPro" id="IPR036412">
    <property type="entry name" value="HAD-like_sf"/>
</dbReference>
<dbReference type="InterPro" id="IPR023214">
    <property type="entry name" value="HAD_sf"/>
</dbReference>
<dbReference type="InterPro" id="IPR017714">
    <property type="entry name" value="MethylthioRu-1-P_deHdtase_MtnB"/>
</dbReference>
<dbReference type="InterPro" id="IPR027505">
    <property type="entry name" value="MtnB_viridiplantae"/>
</dbReference>
<dbReference type="InterPro" id="IPR027514">
    <property type="entry name" value="Salvage_MtnB_euk"/>
</dbReference>
<dbReference type="NCBIfam" id="TIGR01691">
    <property type="entry name" value="enolase-ppase"/>
    <property type="match status" value="1"/>
</dbReference>
<dbReference type="NCBIfam" id="TIGR03328">
    <property type="entry name" value="salvage_mtnB"/>
    <property type="match status" value="1"/>
</dbReference>
<dbReference type="PANTHER" id="PTHR20371">
    <property type="entry name" value="ENOLASE-PHOSPHATASE E1"/>
    <property type="match status" value="1"/>
</dbReference>
<dbReference type="PANTHER" id="PTHR20371:SF1">
    <property type="entry name" value="ENOLASE-PHOSPHATASE E1"/>
    <property type="match status" value="1"/>
</dbReference>
<dbReference type="Pfam" id="PF00596">
    <property type="entry name" value="Aldolase_II"/>
    <property type="match status" value="1"/>
</dbReference>
<dbReference type="Pfam" id="PF00702">
    <property type="entry name" value="Hydrolase"/>
    <property type="match status" value="1"/>
</dbReference>
<dbReference type="SFLD" id="SFLDF00044">
    <property type="entry name" value="enolase-phosphatase"/>
    <property type="match status" value="1"/>
</dbReference>
<dbReference type="SFLD" id="SFLDS00003">
    <property type="entry name" value="Haloacid_Dehalogenase"/>
    <property type="match status" value="1"/>
</dbReference>
<dbReference type="SMART" id="SM01007">
    <property type="entry name" value="Aldolase_II"/>
    <property type="match status" value="1"/>
</dbReference>
<dbReference type="SUPFAM" id="SSF53639">
    <property type="entry name" value="AraD/HMP-PK domain-like"/>
    <property type="match status" value="1"/>
</dbReference>
<dbReference type="SUPFAM" id="SSF56784">
    <property type="entry name" value="HAD-like"/>
    <property type="match status" value="1"/>
</dbReference>
<feature type="chain" id="PRO_0000394160" description="Probable bifunctional methylthioribulose-1-phosphate dehydratase/enolase-phosphatase E1">
    <location>
        <begin position="1"/>
        <end position="518"/>
    </location>
</feature>
<feature type="region of interest" description="Methylthioribulose-1-phosphate dehydratase" evidence="1">
    <location>
        <begin position="1"/>
        <end position="247"/>
    </location>
</feature>
<feature type="region of interest" description="Enolase-phosphatase E1" evidence="1">
    <location>
        <begin position="279"/>
        <end position="518"/>
    </location>
</feature>
<feature type="active site" description="Proton donor/acceptor; for methylthioribulose-1-phosphate dehydratase activity" evidence="1">
    <location>
        <position position="162"/>
    </location>
</feature>
<feature type="binding site" evidence="1">
    <location>
        <position position="119"/>
    </location>
    <ligand>
        <name>substrate</name>
        <label>1</label>
        <note>for methylthioribulose-1-phosphate dehydratase activity</note>
    </ligand>
</feature>
<feature type="binding site" evidence="1">
    <location>
        <position position="137"/>
    </location>
    <ligand>
        <name>Zn(2+)</name>
        <dbReference type="ChEBI" id="CHEBI:29105"/>
    </ligand>
</feature>
<feature type="binding site" evidence="1">
    <location>
        <position position="139"/>
    </location>
    <ligand>
        <name>Zn(2+)</name>
        <dbReference type="ChEBI" id="CHEBI:29105"/>
    </ligand>
</feature>
<feature type="binding site" evidence="1">
    <location>
        <position position="212"/>
    </location>
    <ligand>
        <name>Zn(2+)</name>
        <dbReference type="ChEBI" id="CHEBI:29105"/>
    </ligand>
</feature>
<feature type="binding site" evidence="1">
    <location>
        <position position="282"/>
    </location>
    <ligand>
        <name>Mg(2+)</name>
        <dbReference type="ChEBI" id="CHEBI:18420"/>
    </ligand>
</feature>
<feature type="binding site" evidence="1">
    <location>
        <position position="284"/>
    </location>
    <ligand>
        <name>Mg(2+)</name>
        <dbReference type="ChEBI" id="CHEBI:18420"/>
    </ligand>
</feature>
<feature type="binding site" evidence="1">
    <location>
        <begin position="417"/>
        <end position="418"/>
    </location>
    <ligand>
        <name>substrate</name>
        <label>2</label>
        <note>for enolase-phosphatase activity</note>
    </ligand>
</feature>
<feature type="binding site" evidence="1">
    <location>
        <position position="451"/>
    </location>
    <ligand>
        <name>substrate</name>
        <label>2</label>
        <note>for enolase-phosphatase activity</note>
    </ligand>
</feature>
<feature type="binding site" evidence="1">
    <location>
        <position position="477"/>
    </location>
    <ligand>
        <name>Mg(2+)</name>
        <dbReference type="ChEBI" id="CHEBI:18420"/>
    </ligand>
</feature>
<reference key="1">
    <citation type="journal article" date="2006" name="Science">
        <title>The genome of black cottonwood, Populus trichocarpa (Torr. &amp; Gray).</title>
        <authorList>
            <person name="Tuskan G.A."/>
            <person name="Difazio S."/>
            <person name="Jansson S."/>
            <person name="Bohlmann J."/>
            <person name="Grigoriev I."/>
            <person name="Hellsten U."/>
            <person name="Putnam N."/>
            <person name="Ralph S."/>
            <person name="Rombauts S."/>
            <person name="Salamov A."/>
            <person name="Schein J."/>
            <person name="Sterck L."/>
            <person name="Aerts A."/>
            <person name="Bhalerao R.R."/>
            <person name="Bhalerao R.P."/>
            <person name="Blaudez D."/>
            <person name="Boerjan W."/>
            <person name="Brun A."/>
            <person name="Brunner A."/>
            <person name="Busov V."/>
            <person name="Campbell M."/>
            <person name="Carlson J."/>
            <person name="Chalot M."/>
            <person name="Chapman J."/>
            <person name="Chen G.-L."/>
            <person name="Cooper D."/>
            <person name="Coutinho P.M."/>
            <person name="Couturier J."/>
            <person name="Covert S."/>
            <person name="Cronk Q."/>
            <person name="Cunningham R."/>
            <person name="Davis J."/>
            <person name="Degroeve S."/>
            <person name="Dejardin A."/>
            <person name="dePamphilis C.W."/>
            <person name="Detter J."/>
            <person name="Dirks B."/>
            <person name="Dubchak I."/>
            <person name="Duplessis S."/>
            <person name="Ehlting J."/>
            <person name="Ellis B."/>
            <person name="Gendler K."/>
            <person name="Goodstein D."/>
            <person name="Gribskov M."/>
            <person name="Grimwood J."/>
            <person name="Groover A."/>
            <person name="Gunter L."/>
            <person name="Hamberger B."/>
            <person name="Heinze B."/>
            <person name="Helariutta Y."/>
            <person name="Henrissat B."/>
            <person name="Holligan D."/>
            <person name="Holt R."/>
            <person name="Huang W."/>
            <person name="Islam-Faridi N."/>
            <person name="Jones S."/>
            <person name="Jones-Rhoades M."/>
            <person name="Jorgensen R."/>
            <person name="Joshi C."/>
            <person name="Kangasjaervi J."/>
            <person name="Karlsson J."/>
            <person name="Kelleher C."/>
            <person name="Kirkpatrick R."/>
            <person name="Kirst M."/>
            <person name="Kohler A."/>
            <person name="Kalluri U."/>
            <person name="Larimer F."/>
            <person name="Leebens-Mack J."/>
            <person name="Leple J.-C."/>
            <person name="Locascio P."/>
            <person name="Lou Y."/>
            <person name="Lucas S."/>
            <person name="Martin F."/>
            <person name="Montanini B."/>
            <person name="Napoli C."/>
            <person name="Nelson D.R."/>
            <person name="Nelson C."/>
            <person name="Nieminen K."/>
            <person name="Nilsson O."/>
            <person name="Pereda V."/>
            <person name="Peter G."/>
            <person name="Philippe R."/>
            <person name="Pilate G."/>
            <person name="Poliakov A."/>
            <person name="Razumovskaya J."/>
            <person name="Richardson P."/>
            <person name="Rinaldi C."/>
            <person name="Ritland K."/>
            <person name="Rouze P."/>
            <person name="Ryaboy D."/>
            <person name="Schmutz J."/>
            <person name="Schrader J."/>
            <person name="Segerman B."/>
            <person name="Shin H."/>
            <person name="Siddiqui A."/>
            <person name="Sterky F."/>
            <person name="Terry A."/>
            <person name="Tsai C.-J."/>
            <person name="Uberbacher E."/>
            <person name="Unneberg P."/>
            <person name="Vahala J."/>
            <person name="Wall K."/>
            <person name="Wessler S."/>
            <person name="Yang G."/>
            <person name="Yin T."/>
            <person name="Douglas C."/>
            <person name="Marra M."/>
            <person name="Sandberg G."/>
            <person name="Van de Peer Y."/>
            <person name="Rokhsar D.S."/>
        </authorList>
    </citation>
    <scope>NUCLEOTIDE SEQUENCE [LARGE SCALE GENOMIC DNA]</scope>
    <source>
        <strain>cv. Nisqually</strain>
    </source>
</reference>
<reference key="2">
    <citation type="submission" date="2008-12" db="EMBL/GenBank/DDBJ databases">
        <authorList>
            <consortium name="US DOE Joint Genome Institute (JGI-PGF)"/>
            <person name="Grigoriev I.V."/>
            <person name="Terry A."/>
            <person name="Salamov A.A."/>
            <person name="Otillar R."/>
            <person name="Lou Y."/>
            <person name="Lucas S."/>
            <person name="Hammon N."/>
            <person name="Glavina del Rio T."/>
            <person name="Detter J."/>
            <person name="Kalin E."/>
            <person name="Tice H."/>
            <person name="Pitluck S."/>
            <person name="Chapman J."/>
            <person name="Putnam N.H."/>
            <person name="Brunner A."/>
            <person name="Busov V."/>
            <person name="Campbell M."/>
            <person name="Chalot M."/>
            <person name="Covert S."/>
            <person name="Davis J."/>
            <person name="DiFazio S."/>
            <person name="Gribskov M."/>
            <person name="Gunter L."/>
            <person name="Hamberger B."/>
            <person name="Jansson S."/>
            <person name="Joshi C."/>
            <person name="Larimer F."/>
            <person name="Martin F."/>
            <person name="Napoli C."/>
            <person name="Nelson D."/>
            <person name="Ralph S."/>
            <person name="Rombauts S."/>
            <person name="Rouze P."/>
            <person name="Schrader J."/>
            <person name="Tsai C."/>
            <person name="Vahala J."/>
            <person name="Tuskan G."/>
            <person name="Rokhsar D."/>
        </authorList>
    </citation>
    <scope>GENOME REANNOTATION</scope>
    <source>
        <strain>cv. Nisqually</strain>
    </source>
</reference>
<accession>B9N1F9</accession>
<accession>U5GWH5</accession>
<protein>
    <recommendedName>
        <fullName evidence="1">Probable bifunctional methylthioribulose-1-phosphate dehydratase/enolase-phosphatase E1</fullName>
    </recommendedName>
    <domain>
        <recommendedName>
            <fullName evidence="1">Methylthioribulose-1-phosphate dehydratase</fullName>
            <shortName evidence="1">MTRu-1-P dehydratase</shortName>
            <ecNumber evidence="1">4.2.1.109</ecNumber>
        </recommendedName>
    </domain>
    <domain>
        <recommendedName>
            <fullName evidence="1">Enolase-phosphatase E1</fullName>
            <ecNumber evidence="1">3.1.3.77</ecNumber>
        </recommendedName>
        <alternativeName>
            <fullName evidence="1">2,3-diketo-5-methylthio-1-phosphopentane phosphatase</fullName>
        </alternativeName>
    </domain>
</protein>
<keyword id="KW-0028">Amino-acid biosynthesis</keyword>
<keyword id="KW-0378">Hydrolase</keyword>
<keyword id="KW-0456">Lyase</keyword>
<keyword id="KW-0460">Magnesium</keyword>
<keyword id="KW-0479">Metal-binding</keyword>
<keyword id="KW-0486">Methionine biosynthesis</keyword>
<keyword id="KW-0511">Multifunctional enzyme</keyword>
<keyword id="KW-1185">Reference proteome</keyword>
<keyword id="KW-0862">Zinc</keyword>
<sequence>MAAAPPAVAVNGGGMAAAKVASQAYLESKAVKDTRVLIADLCKQFYTLGWVSGTGGSITIKAHDDSIPKRQQLILMSPSGVQKERMEPEDMYVLATNGSILSSPSPKPYPYKPPKCSDCAPLFLKAYDMRNAGAVIHSHGMESCLVTMINPLSKEFRITHMEMIKGIQGHGYYDELVVPIIENTAYENELTDSLAKAIEAYPKTTAVLVRNHGIYIWGDSWISAKTQAECYHYLFDAAIKLHQIGLDWSTPNHGPIQNVKVKAGMNNSNNRIEPLPRCIVLDIEGTTTPITFVADVLFPYARDNVGRHLSATYDTAETKDDINLLRTQVEDDLAQGVDGAIPIPTDDAGKEEVIAALVANVEAMIKADRKITALKQLQGHIWRTGYENNELEGVVYDDVPEALEKWHALGIKVYIYSSGSRLAQRLIFGKTNYGDLRKYLSGFFDTTVGNKKETRSYIEISESLGVDKPSDILFVTDVFQEAFAAKGAGLDVMISIRPGNAPLPENHGFKTITSFAEI</sequence>